<gene>
    <name type="primary">map3k10</name>
    <name type="synonym">mlk2</name>
</gene>
<feature type="chain" id="PRO_0000277827" description="Mitogen-activated protein kinase kinase kinase 10">
    <location>
        <begin position="1"/>
        <end position="1005"/>
    </location>
</feature>
<feature type="domain" description="SH3" evidence="3">
    <location>
        <begin position="32"/>
        <end position="96"/>
    </location>
</feature>
<feature type="domain" description="Protein kinase" evidence="2">
    <location>
        <begin position="118"/>
        <end position="380"/>
    </location>
</feature>
<feature type="region of interest" description="Leucine-zipper 1">
    <location>
        <begin position="404"/>
        <end position="425"/>
    </location>
</feature>
<feature type="region of interest" description="Leucine-zipper 2">
    <location>
        <begin position="439"/>
        <end position="460"/>
    </location>
</feature>
<feature type="region of interest" description="Disordered" evidence="4">
    <location>
        <begin position="551"/>
        <end position="611"/>
    </location>
</feature>
<feature type="region of interest" description="Disordered" evidence="4">
    <location>
        <begin position="647"/>
        <end position="676"/>
    </location>
</feature>
<feature type="region of interest" description="Disordered" evidence="4">
    <location>
        <begin position="712"/>
        <end position="736"/>
    </location>
</feature>
<feature type="region of interest" description="Disordered" evidence="4">
    <location>
        <begin position="758"/>
        <end position="940"/>
    </location>
</feature>
<feature type="compositionally biased region" description="Basic and acidic residues" evidence="4">
    <location>
        <begin position="576"/>
        <end position="588"/>
    </location>
</feature>
<feature type="compositionally biased region" description="Basic and acidic residues" evidence="4">
    <location>
        <begin position="648"/>
        <end position="658"/>
    </location>
</feature>
<feature type="compositionally biased region" description="Basic and acidic residues" evidence="4">
    <location>
        <begin position="761"/>
        <end position="786"/>
    </location>
</feature>
<feature type="compositionally biased region" description="Basic and acidic residues" evidence="4">
    <location>
        <begin position="799"/>
        <end position="809"/>
    </location>
</feature>
<feature type="compositionally biased region" description="Polar residues" evidence="4">
    <location>
        <begin position="810"/>
        <end position="826"/>
    </location>
</feature>
<feature type="compositionally biased region" description="Pro residues" evidence="4">
    <location>
        <begin position="862"/>
        <end position="879"/>
    </location>
</feature>
<feature type="compositionally biased region" description="Low complexity" evidence="4">
    <location>
        <begin position="915"/>
        <end position="940"/>
    </location>
</feature>
<feature type="active site" description="Proton acceptor" evidence="2">
    <location>
        <position position="242"/>
    </location>
</feature>
<feature type="binding site" evidence="2">
    <location>
        <begin position="124"/>
        <end position="132"/>
    </location>
    <ligand>
        <name>ATP</name>
        <dbReference type="ChEBI" id="CHEBI:30616"/>
    </ligand>
</feature>
<feature type="binding site" evidence="2">
    <location>
        <position position="145"/>
    </location>
    <ligand>
        <name>ATP</name>
        <dbReference type="ChEBI" id="CHEBI:30616"/>
    </ligand>
</feature>
<reference key="1">
    <citation type="journal article" date="2003" name="Dev. Biol.">
        <title>A tissue restricted role for the Xenopus Jun N-terminal kinase kinase kinase MLK2 in cement gland and pronephric tubule differentiation.</title>
        <authorList>
            <person name="Poitras L."/>
            <person name="Bisson N."/>
            <person name="Islam N."/>
            <person name="Moss T."/>
        </authorList>
    </citation>
    <scope>NUCLEOTIDE SEQUENCE [MRNA]</scope>
    <scope>FUNCTION</scope>
    <scope>INTERACTION WITH RAC1</scope>
    <scope>TISSUE SPECIFICITY</scope>
    <scope>DEVELOPMENTAL STAGE</scope>
    <source>
        <tissue>Tail bud</tissue>
    </source>
</reference>
<reference key="2">
    <citation type="journal article" date="2003" name="FEBS Lett.">
        <title>PAK interacts with NCK and MLK2 to regulate the activation of jun N-terminal kinase.</title>
        <authorList>
            <person name="Poitras L."/>
            <person name="Jean S."/>
            <person name="Islam N."/>
            <person name="Moss T."/>
        </authorList>
    </citation>
    <scope>FUNCTION</scope>
    <scope>INTERACTION WITH PAK1</scope>
</reference>
<reference key="3">
    <citation type="journal article" date="2008" name="Differentiation">
        <title>A ubiquitin-conjugating enzyme, ube2d3.2, regulates xMLK2 and pronephros formation in Xenopus.</title>
        <authorList>
            <person name="Jean S."/>
            <person name="Moss T."/>
        </authorList>
    </citation>
    <scope>INTERACTION WITH UBE2D4</scope>
    <scope>HOMODIMERIZATION</scope>
    <scope>UBIQUITINATION</scope>
</reference>
<dbReference type="EC" id="2.7.11.25"/>
<dbReference type="EMBL" id="AF510499">
    <property type="protein sequence ID" value="AAP46399.1"/>
    <property type="molecule type" value="mRNA"/>
</dbReference>
<dbReference type="RefSeq" id="NP_001082629.1">
    <property type="nucleotide sequence ID" value="NM_001089160.1"/>
</dbReference>
<dbReference type="SMR" id="Q7T2V3"/>
<dbReference type="BioGRID" id="99942">
    <property type="interactions" value="2"/>
</dbReference>
<dbReference type="GeneID" id="398612"/>
<dbReference type="KEGG" id="xla:398612"/>
<dbReference type="AGR" id="Xenbase:XB-GENE-920952"/>
<dbReference type="CTD" id="398612"/>
<dbReference type="Xenbase" id="XB-GENE-920952">
    <property type="gene designation" value="map3k10.L"/>
</dbReference>
<dbReference type="OrthoDB" id="339325at2759"/>
<dbReference type="Proteomes" id="UP000186698">
    <property type="component" value="Chromosome 8L"/>
</dbReference>
<dbReference type="Bgee" id="398612">
    <property type="expression patterns" value="Expressed in zone of skin and 19 other cell types or tissues"/>
</dbReference>
<dbReference type="GO" id="GO:0005737">
    <property type="term" value="C:cytoplasm"/>
    <property type="evidence" value="ECO:0000318"/>
    <property type="project" value="GO_Central"/>
</dbReference>
<dbReference type="GO" id="GO:0005524">
    <property type="term" value="F:ATP binding"/>
    <property type="evidence" value="ECO:0007669"/>
    <property type="project" value="UniProtKB-KW"/>
</dbReference>
<dbReference type="GO" id="GO:0004706">
    <property type="term" value="F:JUN kinase kinase kinase activity"/>
    <property type="evidence" value="ECO:0000314"/>
    <property type="project" value="UniProtKB"/>
</dbReference>
<dbReference type="GO" id="GO:0019900">
    <property type="term" value="F:kinase binding"/>
    <property type="evidence" value="ECO:0000353"/>
    <property type="project" value="UniProtKB"/>
</dbReference>
<dbReference type="GO" id="GO:0042803">
    <property type="term" value="F:protein homodimerization activity"/>
    <property type="evidence" value="ECO:0000314"/>
    <property type="project" value="UniProtKB"/>
</dbReference>
<dbReference type="GO" id="GO:0106310">
    <property type="term" value="F:protein serine kinase activity"/>
    <property type="evidence" value="ECO:0007669"/>
    <property type="project" value="RHEA"/>
</dbReference>
<dbReference type="GO" id="GO:0031267">
    <property type="term" value="F:small GTPase binding"/>
    <property type="evidence" value="ECO:0000314"/>
    <property type="project" value="UniProtKB"/>
</dbReference>
<dbReference type="GO" id="GO:0031624">
    <property type="term" value="F:ubiquitin conjugating enzyme binding"/>
    <property type="evidence" value="ECO:0000353"/>
    <property type="project" value="UniProtKB"/>
</dbReference>
<dbReference type="GO" id="GO:0071570">
    <property type="term" value="P:cement gland development"/>
    <property type="evidence" value="ECO:0000315"/>
    <property type="project" value="UniProtKB"/>
</dbReference>
<dbReference type="GO" id="GO:0043065">
    <property type="term" value="P:positive regulation of apoptotic process"/>
    <property type="evidence" value="ECO:0000318"/>
    <property type="project" value="GO_Central"/>
</dbReference>
<dbReference type="GO" id="GO:0046330">
    <property type="term" value="P:positive regulation of JNK cascade"/>
    <property type="evidence" value="ECO:0000314"/>
    <property type="project" value="UniProtKB"/>
</dbReference>
<dbReference type="GO" id="GO:0048793">
    <property type="term" value="P:pronephros development"/>
    <property type="evidence" value="ECO:0000315"/>
    <property type="project" value="UniProtKB"/>
</dbReference>
<dbReference type="GO" id="GO:0007165">
    <property type="term" value="P:signal transduction"/>
    <property type="evidence" value="ECO:0000318"/>
    <property type="project" value="GO_Central"/>
</dbReference>
<dbReference type="CDD" id="cd12059">
    <property type="entry name" value="SH3_MLK1-3"/>
    <property type="match status" value="1"/>
</dbReference>
<dbReference type="CDD" id="cd14148">
    <property type="entry name" value="STKc_MLK2"/>
    <property type="match status" value="1"/>
</dbReference>
<dbReference type="FunFam" id="1.10.510.10:FF:000076">
    <property type="entry name" value="Mitogen-activated protein kinase kinase kinase"/>
    <property type="match status" value="1"/>
</dbReference>
<dbReference type="FunFam" id="2.30.30.40:FF:000079">
    <property type="entry name" value="Mitogen-activated protein kinase kinase kinase"/>
    <property type="match status" value="1"/>
</dbReference>
<dbReference type="FunFam" id="3.30.200.20:FF:000085">
    <property type="entry name" value="Mitogen-activated protein kinase kinase kinase"/>
    <property type="match status" value="1"/>
</dbReference>
<dbReference type="Gene3D" id="3.30.200.20">
    <property type="entry name" value="Phosphorylase Kinase, domain 1"/>
    <property type="match status" value="1"/>
</dbReference>
<dbReference type="Gene3D" id="2.30.30.40">
    <property type="entry name" value="SH3 Domains"/>
    <property type="match status" value="1"/>
</dbReference>
<dbReference type="Gene3D" id="1.10.510.10">
    <property type="entry name" value="Transferase(Phosphotransferase) domain 1"/>
    <property type="match status" value="1"/>
</dbReference>
<dbReference type="InterPro" id="IPR011009">
    <property type="entry name" value="Kinase-like_dom_sf"/>
</dbReference>
<dbReference type="InterPro" id="IPR035779">
    <property type="entry name" value="MLK1-3_SH3"/>
</dbReference>
<dbReference type="InterPro" id="IPR016231">
    <property type="entry name" value="MLK1-4"/>
</dbReference>
<dbReference type="InterPro" id="IPR000719">
    <property type="entry name" value="Prot_kinase_dom"/>
</dbReference>
<dbReference type="InterPro" id="IPR017441">
    <property type="entry name" value="Protein_kinase_ATP_BS"/>
</dbReference>
<dbReference type="InterPro" id="IPR001245">
    <property type="entry name" value="Ser-Thr/Tyr_kinase_cat_dom"/>
</dbReference>
<dbReference type="InterPro" id="IPR051681">
    <property type="entry name" value="Ser/Thr_Kinases-Pseudokinases"/>
</dbReference>
<dbReference type="InterPro" id="IPR036028">
    <property type="entry name" value="SH3-like_dom_sf"/>
</dbReference>
<dbReference type="InterPro" id="IPR001452">
    <property type="entry name" value="SH3_domain"/>
</dbReference>
<dbReference type="PANTHER" id="PTHR44329:SF39">
    <property type="entry name" value="MITOGEN-ACTIVATED PROTEIN KINASE KINASE KINASE 10"/>
    <property type="match status" value="1"/>
</dbReference>
<dbReference type="PANTHER" id="PTHR44329">
    <property type="entry name" value="SERINE/THREONINE-PROTEIN KINASE TNNI3K-RELATED"/>
    <property type="match status" value="1"/>
</dbReference>
<dbReference type="Pfam" id="PF07714">
    <property type="entry name" value="PK_Tyr_Ser-Thr"/>
    <property type="match status" value="1"/>
</dbReference>
<dbReference type="Pfam" id="PF00018">
    <property type="entry name" value="SH3_1"/>
    <property type="match status" value="1"/>
</dbReference>
<dbReference type="PIRSF" id="PIRSF000556">
    <property type="entry name" value="MAPKKK9_11"/>
    <property type="match status" value="1"/>
</dbReference>
<dbReference type="PRINTS" id="PR00452">
    <property type="entry name" value="SH3DOMAIN"/>
</dbReference>
<dbReference type="PRINTS" id="PR00109">
    <property type="entry name" value="TYRKINASE"/>
</dbReference>
<dbReference type="SMART" id="SM00326">
    <property type="entry name" value="SH3"/>
    <property type="match status" value="1"/>
</dbReference>
<dbReference type="SUPFAM" id="SSF56112">
    <property type="entry name" value="Protein kinase-like (PK-like)"/>
    <property type="match status" value="1"/>
</dbReference>
<dbReference type="SUPFAM" id="SSF50044">
    <property type="entry name" value="SH3-domain"/>
    <property type="match status" value="1"/>
</dbReference>
<dbReference type="PROSITE" id="PS00107">
    <property type="entry name" value="PROTEIN_KINASE_ATP"/>
    <property type="match status" value="1"/>
</dbReference>
<dbReference type="PROSITE" id="PS50011">
    <property type="entry name" value="PROTEIN_KINASE_DOM"/>
    <property type="match status" value="1"/>
</dbReference>
<dbReference type="PROSITE" id="PS50002">
    <property type="entry name" value="SH3"/>
    <property type="match status" value="1"/>
</dbReference>
<sequence>MDGLPKDEAFLWQSSKDNKENGVWSDVQSYGVSNPLWMAVFDYEPTAEEELTLRRGDLVEILSKDSTVSGDEGWWTGKIKDKVGIFPSNYVVSDDKYTTLTGAPKQCPLPLEIEFDELNLDEIIGVGGFGKVYKGLWRDEEVAVKAVRHDPDEDINVTAENVRQEAKIFCMLCHPNIIALTGVCLKPPHLCLVMEYARGGPLHRALAGKKVPAHVLVNWAVQIAKGMTYLHNEAIVPIIHRDLGSSNILILEKAENDDLFNKTLNITDFGLAREWQKTTKMSAAGTYAWMAPEVIRLSLFSKSSDVWSFGVLLWELLTGEVPYREIDALAVAYGVAMNKLTLPIPSTCPEPFVRILEACWDPDPHSRPTFSCILEQLTTIEQSAMFQMPLESFHSLQEDWRLEIQQMFDELRTKEKELRSREEELVRAAEEQRILEDLLKRREQELAEREIDIVERELNIIMYQMYQEKPKVKKRKGNFKKSRLKLKDGNRISLPSGFEHKITVQASPMLDKCKGQGTSSYSPPGSPLIIPRLRAIRLTPVDGSKTWGRSSVLKKEEVTTSNKKKGRTWGPSSTQQKERVGGEERLKTLGEGNKQWSSSAPNLGKSPKHTPISVGFASLTEMEEYADSDGSVPQSPYSQSYLTLPVQSDHRSHPEDTAHAGAPSSDSPKRGSQSRRKSELVLLGCASLLAAVALGSDLSELVPQEEKRKGIFQWAGRGPRRRASSPSRSMSYGEDSVIPSSSVTLISLSSISDCNSTRSLIRSDSDDIGLDHDNVSSGRGVKEDRGQQPNVGSNPLVDYKVESFKRDPKQSLTPTHVTVGRNNTTETRGHRRTPSDGAIRQVTQGHKRSPSDGSTPYQCEPEPSPFPRLPDPHFVFPPPVRRKDTGVERPTSLEFAPRPRPSSNRPRMDPWKFVSLSQTHSSSPSSGGGDACSSGSAEGAQVADVEETLLDMEVEGQRLDSTVPLCGLGLRPTTDPFFKYGNRRVLMKELSISLLQYKVESGVLL</sequence>
<organism>
    <name type="scientific">Xenopus laevis</name>
    <name type="common">African clawed frog</name>
    <dbReference type="NCBI Taxonomy" id="8355"/>
    <lineage>
        <taxon>Eukaryota</taxon>
        <taxon>Metazoa</taxon>
        <taxon>Chordata</taxon>
        <taxon>Craniata</taxon>
        <taxon>Vertebrata</taxon>
        <taxon>Euteleostomi</taxon>
        <taxon>Amphibia</taxon>
        <taxon>Batrachia</taxon>
        <taxon>Anura</taxon>
        <taxon>Pipoidea</taxon>
        <taxon>Pipidae</taxon>
        <taxon>Xenopodinae</taxon>
        <taxon>Xenopus</taxon>
        <taxon>Xenopus</taxon>
    </lineage>
</organism>
<protein>
    <recommendedName>
        <fullName>Mitogen-activated protein kinase kinase kinase 10</fullName>
        <ecNumber>2.7.11.25</ecNumber>
    </recommendedName>
    <alternativeName>
        <fullName>Mixed lineage kinase 2</fullName>
        <shortName>xMLK2</shortName>
    </alternativeName>
</protein>
<accession>Q7T2V3</accession>
<proteinExistence type="evidence at protein level"/>
<keyword id="KW-0067">ATP-binding</keyword>
<keyword id="KW-0418">Kinase</keyword>
<keyword id="KW-0547">Nucleotide-binding</keyword>
<keyword id="KW-1185">Reference proteome</keyword>
<keyword id="KW-0677">Repeat</keyword>
<keyword id="KW-0723">Serine/threonine-protein kinase</keyword>
<keyword id="KW-0728">SH3 domain</keyword>
<keyword id="KW-0808">Transferase</keyword>
<keyword id="KW-0832">Ubl conjugation</keyword>
<evidence type="ECO:0000250" key="1"/>
<evidence type="ECO:0000255" key="2">
    <source>
        <dbReference type="PROSITE-ProRule" id="PRU00159"/>
    </source>
</evidence>
<evidence type="ECO:0000255" key="3">
    <source>
        <dbReference type="PROSITE-ProRule" id="PRU00192"/>
    </source>
</evidence>
<evidence type="ECO:0000256" key="4">
    <source>
        <dbReference type="SAM" id="MobiDB-lite"/>
    </source>
</evidence>
<evidence type="ECO:0000269" key="5">
    <source>
    </source>
</evidence>
<evidence type="ECO:0000269" key="6">
    <source>
    </source>
</evidence>
<evidence type="ECO:0000269" key="7">
    <source>
    </source>
</evidence>
<evidence type="ECO:0000305" key="8"/>
<name>M3K10_XENLA</name>
<comment type="function">
    <text evidence="5 6">Activates the JUN N-terminal pathway. Essential for pronephros and cement gland development.</text>
</comment>
<comment type="catalytic activity">
    <reaction>
        <text>L-seryl-[protein] + ATP = O-phospho-L-seryl-[protein] + ADP + H(+)</text>
        <dbReference type="Rhea" id="RHEA:17989"/>
        <dbReference type="Rhea" id="RHEA-COMP:9863"/>
        <dbReference type="Rhea" id="RHEA-COMP:11604"/>
        <dbReference type="ChEBI" id="CHEBI:15378"/>
        <dbReference type="ChEBI" id="CHEBI:29999"/>
        <dbReference type="ChEBI" id="CHEBI:30616"/>
        <dbReference type="ChEBI" id="CHEBI:83421"/>
        <dbReference type="ChEBI" id="CHEBI:456216"/>
        <dbReference type="EC" id="2.7.11.25"/>
    </reaction>
</comment>
<comment type="catalytic activity">
    <reaction>
        <text>L-threonyl-[protein] + ATP = O-phospho-L-threonyl-[protein] + ADP + H(+)</text>
        <dbReference type="Rhea" id="RHEA:46608"/>
        <dbReference type="Rhea" id="RHEA-COMP:11060"/>
        <dbReference type="Rhea" id="RHEA-COMP:11605"/>
        <dbReference type="ChEBI" id="CHEBI:15378"/>
        <dbReference type="ChEBI" id="CHEBI:30013"/>
        <dbReference type="ChEBI" id="CHEBI:30616"/>
        <dbReference type="ChEBI" id="CHEBI:61977"/>
        <dbReference type="ChEBI" id="CHEBI:456216"/>
        <dbReference type="EC" id="2.7.11.25"/>
    </reaction>
</comment>
<comment type="cofactor">
    <cofactor evidence="1">
        <name>Mg(2+)</name>
        <dbReference type="ChEBI" id="CHEBI:18420"/>
    </cofactor>
</comment>
<comment type="activity regulation">
    <text evidence="1">Homodimerization via the leucine zipper domains is required for autophosphorylation and subsequent activation.</text>
</comment>
<comment type="subunit">
    <text evidence="5 6 7">Homodimer. Binds to the GTPase rac1 but not cdc42 or rhoA. Interacts (via kinase domain) with pak1 (via kinase domain). Interacts with the ubiquitin-conjugating enzyme ube2d4.</text>
</comment>
<comment type="tissue specificity">
    <text evidence="5">In adults, strongly expressed in the brain and spleen with lower levels in pancreas, heart, muscle and kidney (at protein level). In the developing embryo, expressed at stage 22 in the cement gland. Weakly expressed in the pronephros from stage 24 or 25, with expression increasing in strength by stage 30 and continuing at least until stage 37. Expression in the developing pronephros correlates with epithelialization of the proximal pronephric tubules.</text>
</comment>
<comment type="developmental stage">
    <text evidence="5">Expressed zygotically from stages 12 to 14 (late gastrula to early neurula), increasing in concentration up to stages 40 to 45 (late tadpole). Expression continues through to adults.</text>
</comment>
<comment type="PTM">
    <text evidence="1">Autophosphorylation on serine and threonine residues within the activation loop plays a role in enzyme activation.</text>
</comment>
<comment type="PTM">
    <text evidence="7">Mono- and poly-ubiquitinated.</text>
</comment>
<comment type="similarity">
    <text evidence="8">Belongs to the protein kinase superfamily. STE Ser/Thr protein kinase family. MAP kinase kinase kinase subfamily.</text>
</comment>